<protein>
    <recommendedName>
        <fullName evidence="1">dTTP/UTP pyrophosphatase</fullName>
        <shortName evidence="1">dTTPase/UTPase</shortName>
        <ecNumber evidence="1">3.6.1.9</ecNumber>
    </recommendedName>
    <alternativeName>
        <fullName evidence="1">Nucleoside triphosphate pyrophosphatase</fullName>
    </alternativeName>
    <alternativeName>
        <fullName evidence="1">Nucleotide pyrophosphatase</fullName>
        <shortName evidence="1">Nucleotide PPase</shortName>
    </alternativeName>
</protein>
<proteinExistence type="inferred from homology"/>
<keyword id="KW-0963">Cytoplasm</keyword>
<keyword id="KW-0378">Hydrolase</keyword>
<keyword id="KW-0546">Nucleotide metabolism</keyword>
<organism>
    <name type="scientific">Vibrio parahaemolyticus serotype O3:K6 (strain RIMD 2210633)</name>
    <dbReference type="NCBI Taxonomy" id="223926"/>
    <lineage>
        <taxon>Bacteria</taxon>
        <taxon>Pseudomonadati</taxon>
        <taxon>Pseudomonadota</taxon>
        <taxon>Gammaproteobacteria</taxon>
        <taxon>Vibrionales</taxon>
        <taxon>Vibrionaceae</taxon>
        <taxon>Vibrio</taxon>
    </lineage>
</organism>
<accession>Q87LC4</accession>
<sequence>MKKSLSLVLASGSPRRKELLAQLGYDFDIVLPDIEEAKQADEQAQDYVLRLSLEKAQAGLALAKPDSVVLGSDTVVVCDDRVLEKPKSFEDSKRMLTDLSGRRHQVMTAVSVVSSEQQHSVVVTTDVWFKPLTHEEIEQYWQSGEPCDKAGSYGIQGLGGRFVTRIEGSYHAVVGLPLFETDQLIQEFL</sequence>
<comment type="function">
    <text evidence="1">Nucleoside triphosphate pyrophosphatase that hydrolyzes dTTP and UTP. May have a dual role in cell division arrest and in preventing the incorporation of modified nucleotides into cellular nucleic acids.</text>
</comment>
<comment type="catalytic activity">
    <reaction evidence="1">
        <text>dTTP + H2O = dTMP + diphosphate + H(+)</text>
        <dbReference type="Rhea" id="RHEA:28534"/>
        <dbReference type="ChEBI" id="CHEBI:15377"/>
        <dbReference type="ChEBI" id="CHEBI:15378"/>
        <dbReference type="ChEBI" id="CHEBI:33019"/>
        <dbReference type="ChEBI" id="CHEBI:37568"/>
        <dbReference type="ChEBI" id="CHEBI:63528"/>
        <dbReference type="EC" id="3.6.1.9"/>
    </reaction>
</comment>
<comment type="catalytic activity">
    <reaction evidence="1">
        <text>UTP + H2O = UMP + diphosphate + H(+)</text>
        <dbReference type="Rhea" id="RHEA:29395"/>
        <dbReference type="ChEBI" id="CHEBI:15377"/>
        <dbReference type="ChEBI" id="CHEBI:15378"/>
        <dbReference type="ChEBI" id="CHEBI:33019"/>
        <dbReference type="ChEBI" id="CHEBI:46398"/>
        <dbReference type="ChEBI" id="CHEBI:57865"/>
        <dbReference type="EC" id="3.6.1.9"/>
    </reaction>
</comment>
<comment type="cofactor">
    <cofactor evidence="1">
        <name>a divalent metal cation</name>
        <dbReference type="ChEBI" id="CHEBI:60240"/>
    </cofactor>
</comment>
<comment type="subcellular location">
    <subcellularLocation>
        <location evidence="1">Cytoplasm</location>
    </subcellularLocation>
</comment>
<comment type="similarity">
    <text evidence="1">Belongs to the Maf family. YhdE subfamily.</text>
</comment>
<evidence type="ECO:0000255" key="1">
    <source>
        <dbReference type="HAMAP-Rule" id="MF_00528"/>
    </source>
</evidence>
<name>NTPPA_VIBPA</name>
<gene>
    <name type="ordered locus">VP2688</name>
</gene>
<dbReference type="EC" id="3.6.1.9" evidence="1"/>
<dbReference type="EMBL" id="BA000031">
    <property type="protein sequence ID" value="BAC60951.1"/>
    <property type="molecule type" value="Genomic_DNA"/>
</dbReference>
<dbReference type="RefSeq" id="NP_799067.1">
    <property type="nucleotide sequence ID" value="NC_004603.1"/>
</dbReference>
<dbReference type="RefSeq" id="WP_005461824.1">
    <property type="nucleotide sequence ID" value="NC_004603.1"/>
</dbReference>
<dbReference type="SMR" id="Q87LC4"/>
<dbReference type="GeneID" id="1190233"/>
<dbReference type="KEGG" id="vpa:VP2688"/>
<dbReference type="PATRIC" id="fig|223926.6.peg.2583"/>
<dbReference type="eggNOG" id="COG0424">
    <property type="taxonomic scope" value="Bacteria"/>
</dbReference>
<dbReference type="HOGENOM" id="CLU_040416_2_1_6"/>
<dbReference type="Proteomes" id="UP000002493">
    <property type="component" value="Chromosome 1"/>
</dbReference>
<dbReference type="GO" id="GO:0005737">
    <property type="term" value="C:cytoplasm"/>
    <property type="evidence" value="ECO:0007669"/>
    <property type="project" value="UniProtKB-SubCell"/>
</dbReference>
<dbReference type="GO" id="GO:0036218">
    <property type="term" value="F:dTTP diphosphatase activity"/>
    <property type="evidence" value="ECO:0007669"/>
    <property type="project" value="RHEA"/>
</dbReference>
<dbReference type="GO" id="GO:0036221">
    <property type="term" value="F:UTP diphosphatase activity"/>
    <property type="evidence" value="ECO:0007669"/>
    <property type="project" value="RHEA"/>
</dbReference>
<dbReference type="GO" id="GO:0009117">
    <property type="term" value="P:nucleotide metabolic process"/>
    <property type="evidence" value="ECO:0007669"/>
    <property type="project" value="UniProtKB-KW"/>
</dbReference>
<dbReference type="CDD" id="cd00555">
    <property type="entry name" value="Maf"/>
    <property type="match status" value="1"/>
</dbReference>
<dbReference type="FunFam" id="3.90.950.10:FF:000004">
    <property type="entry name" value="dTTP/UTP pyrophosphatase"/>
    <property type="match status" value="1"/>
</dbReference>
<dbReference type="Gene3D" id="3.90.950.10">
    <property type="match status" value="1"/>
</dbReference>
<dbReference type="HAMAP" id="MF_00528">
    <property type="entry name" value="Maf"/>
    <property type="match status" value="1"/>
</dbReference>
<dbReference type="InterPro" id="IPR029001">
    <property type="entry name" value="ITPase-like_fam"/>
</dbReference>
<dbReference type="InterPro" id="IPR003697">
    <property type="entry name" value="Maf-like"/>
</dbReference>
<dbReference type="NCBIfam" id="TIGR00172">
    <property type="entry name" value="maf"/>
    <property type="match status" value="1"/>
</dbReference>
<dbReference type="PANTHER" id="PTHR43213">
    <property type="entry name" value="BIFUNCTIONAL DTTP/UTP PYROPHOSPHATASE/METHYLTRANSFERASE PROTEIN-RELATED"/>
    <property type="match status" value="1"/>
</dbReference>
<dbReference type="PANTHER" id="PTHR43213:SF5">
    <property type="entry name" value="BIFUNCTIONAL DTTP_UTP PYROPHOSPHATASE_METHYLTRANSFERASE PROTEIN-RELATED"/>
    <property type="match status" value="1"/>
</dbReference>
<dbReference type="Pfam" id="PF02545">
    <property type="entry name" value="Maf"/>
    <property type="match status" value="1"/>
</dbReference>
<dbReference type="PIRSF" id="PIRSF006305">
    <property type="entry name" value="Maf"/>
    <property type="match status" value="1"/>
</dbReference>
<dbReference type="SUPFAM" id="SSF52972">
    <property type="entry name" value="ITPase-like"/>
    <property type="match status" value="1"/>
</dbReference>
<feature type="chain" id="PRO_0000123070" description="dTTP/UTP pyrophosphatase">
    <location>
        <begin position="1"/>
        <end position="189"/>
    </location>
</feature>
<feature type="active site" description="Proton acceptor" evidence="1">
    <location>
        <position position="73"/>
    </location>
</feature>
<feature type="site" description="Important for substrate specificity" evidence="1">
    <location>
        <position position="15"/>
    </location>
</feature>
<feature type="site" description="Important for substrate specificity" evidence="1">
    <location>
        <position position="74"/>
    </location>
</feature>
<feature type="site" description="Important for substrate specificity" evidence="1">
    <location>
        <position position="156"/>
    </location>
</feature>
<reference key="1">
    <citation type="journal article" date="2003" name="Lancet">
        <title>Genome sequence of Vibrio parahaemolyticus: a pathogenic mechanism distinct from that of V. cholerae.</title>
        <authorList>
            <person name="Makino K."/>
            <person name="Oshima K."/>
            <person name="Kurokawa K."/>
            <person name="Yokoyama K."/>
            <person name="Uda T."/>
            <person name="Tagomori K."/>
            <person name="Iijima Y."/>
            <person name="Najima M."/>
            <person name="Nakano M."/>
            <person name="Yamashita A."/>
            <person name="Kubota Y."/>
            <person name="Kimura S."/>
            <person name="Yasunaga T."/>
            <person name="Honda T."/>
            <person name="Shinagawa H."/>
            <person name="Hattori M."/>
            <person name="Iida T."/>
        </authorList>
    </citation>
    <scope>NUCLEOTIDE SEQUENCE [LARGE SCALE GENOMIC DNA]</scope>
    <source>
        <strain>RIMD 2210633</strain>
    </source>
</reference>